<comment type="function">
    <text evidence="1">Converts holo-ACP to apo-ACP by hydrolytic cleavage of the phosphopantetheine prosthetic group from ACP.</text>
</comment>
<comment type="catalytic activity">
    <reaction evidence="1">
        <text>holo-[ACP] + H2O = apo-[ACP] + (R)-4'-phosphopantetheine + H(+)</text>
        <dbReference type="Rhea" id="RHEA:20537"/>
        <dbReference type="Rhea" id="RHEA-COMP:9685"/>
        <dbReference type="Rhea" id="RHEA-COMP:9690"/>
        <dbReference type="ChEBI" id="CHEBI:15377"/>
        <dbReference type="ChEBI" id="CHEBI:15378"/>
        <dbReference type="ChEBI" id="CHEBI:29999"/>
        <dbReference type="ChEBI" id="CHEBI:61723"/>
        <dbReference type="ChEBI" id="CHEBI:64479"/>
        <dbReference type="EC" id="3.1.4.14"/>
    </reaction>
</comment>
<comment type="similarity">
    <text evidence="1">Belongs to the AcpH family.</text>
</comment>
<name>ACPH_SALCH</name>
<gene>
    <name evidence="1" type="primary">acpH</name>
    <name type="ordered locus">SCH_0445</name>
</gene>
<proteinExistence type="inferred from homology"/>
<feature type="chain" id="PRO_0000226270" description="Acyl carrier protein phosphodiesterase">
    <location>
        <begin position="1"/>
        <end position="193"/>
    </location>
</feature>
<evidence type="ECO:0000255" key="1">
    <source>
        <dbReference type="HAMAP-Rule" id="MF_01950"/>
    </source>
</evidence>
<protein>
    <recommendedName>
        <fullName evidence="1">Acyl carrier protein phosphodiesterase</fullName>
        <shortName evidence="1">ACP phosphodiesterase</shortName>
        <ecNumber evidence="1">3.1.4.14</ecNumber>
    </recommendedName>
</protein>
<organism>
    <name type="scientific">Salmonella choleraesuis (strain SC-B67)</name>
    <dbReference type="NCBI Taxonomy" id="321314"/>
    <lineage>
        <taxon>Bacteria</taxon>
        <taxon>Pseudomonadati</taxon>
        <taxon>Pseudomonadota</taxon>
        <taxon>Gammaproteobacteria</taxon>
        <taxon>Enterobacterales</taxon>
        <taxon>Enterobacteriaceae</taxon>
        <taxon>Salmonella</taxon>
    </lineage>
</organism>
<accession>Q57SG0</accession>
<reference key="1">
    <citation type="journal article" date="2005" name="Nucleic Acids Res.">
        <title>The genome sequence of Salmonella enterica serovar Choleraesuis, a highly invasive and resistant zoonotic pathogen.</title>
        <authorList>
            <person name="Chiu C.-H."/>
            <person name="Tang P."/>
            <person name="Chu C."/>
            <person name="Hu S."/>
            <person name="Bao Q."/>
            <person name="Yu J."/>
            <person name="Chou Y.-Y."/>
            <person name="Wang H.-S."/>
            <person name="Lee Y.-S."/>
        </authorList>
    </citation>
    <scope>NUCLEOTIDE SEQUENCE [LARGE SCALE GENOMIC DNA]</scope>
    <source>
        <strain>SC-B67</strain>
    </source>
</reference>
<keyword id="KW-0275">Fatty acid biosynthesis</keyword>
<keyword id="KW-0276">Fatty acid metabolism</keyword>
<keyword id="KW-0378">Hydrolase</keyword>
<keyword id="KW-0444">Lipid biosynthesis</keyword>
<keyword id="KW-0443">Lipid metabolism</keyword>
<sequence length="193" mass="22917">MNFLAHLHLAHLADSSLSGNLLADFVRGNPATHYPPDVVEGIYMHRRIDVMTDNLPEVREAREWFRHETRRVAPITLDVMWDHFLSRHWTQISPDFPLQAFVGYAHAQVATILPDSPPRFVNLNDYLWSEKWLERYRDMDFIQNVLNGMANRRPRLDALRDSWYDLDAHYDALEERFWHFYPRMMAQAARKAL</sequence>
<dbReference type="EC" id="3.1.4.14" evidence="1"/>
<dbReference type="EMBL" id="AE017220">
    <property type="protein sequence ID" value="AAX64351.1"/>
    <property type="molecule type" value="Genomic_DNA"/>
</dbReference>
<dbReference type="RefSeq" id="WP_001009858.1">
    <property type="nucleotide sequence ID" value="NC_006905.1"/>
</dbReference>
<dbReference type="SMR" id="Q57SG0"/>
<dbReference type="KEGG" id="sec:SCH_0445"/>
<dbReference type="HOGENOM" id="CLU_099370_1_0_6"/>
<dbReference type="Proteomes" id="UP000000538">
    <property type="component" value="Chromosome"/>
</dbReference>
<dbReference type="GO" id="GO:0008770">
    <property type="term" value="F:[acyl-carrier-protein] phosphodiesterase activity"/>
    <property type="evidence" value="ECO:0007669"/>
    <property type="project" value="UniProtKB-UniRule"/>
</dbReference>
<dbReference type="GO" id="GO:0006633">
    <property type="term" value="P:fatty acid biosynthetic process"/>
    <property type="evidence" value="ECO:0007669"/>
    <property type="project" value="UniProtKB-UniRule"/>
</dbReference>
<dbReference type="HAMAP" id="MF_01950">
    <property type="entry name" value="AcpH"/>
    <property type="match status" value="1"/>
</dbReference>
<dbReference type="InterPro" id="IPR007431">
    <property type="entry name" value="ACP_PD"/>
</dbReference>
<dbReference type="InterPro" id="IPR023491">
    <property type="entry name" value="ACP_phosphodiesterase_gpbac"/>
</dbReference>
<dbReference type="NCBIfam" id="NF007466">
    <property type="entry name" value="PRK10045.1"/>
    <property type="match status" value="1"/>
</dbReference>
<dbReference type="PANTHER" id="PTHR38764">
    <property type="entry name" value="ACYL CARRIER PROTEIN PHOSPHODIESTERASE"/>
    <property type="match status" value="1"/>
</dbReference>
<dbReference type="PANTHER" id="PTHR38764:SF1">
    <property type="entry name" value="ACYL CARRIER PROTEIN PHOSPHODIESTERASE"/>
    <property type="match status" value="1"/>
</dbReference>
<dbReference type="Pfam" id="PF04336">
    <property type="entry name" value="ACP_PD"/>
    <property type="match status" value="1"/>
</dbReference>
<dbReference type="PIRSF" id="PIRSF011489">
    <property type="entry name" value="DUF479"/>
    <property type="match status" value="1"/>
</dbReference>